<gene>
    <name evidence="3" type="primary">esaB</name>
    <name type="ordered locus">NWMN_0221.1</name>
</gene>
<name>ESAB_STAAE</name>
<protein>
    <recommendedName>
        <fullName evidence="4">Type VII secretion system accessory factor EsaB</fullName>
    </recommendedName>
</protein>
<dbReference type="EMBL" id="AP009351">
    <property type="status" value="NOT_ANNOTATED_CDS"/>
    <property type="molecule type" value="Genomic_DNA"/>
</dbReference>
<dbReference type="RefSeq" id="WP_001071606.1">
    <property type="nucleotide sequence ID" value="NZ_JBBIAE010000003.1"/>
</dbReference>
<dbReference type="SMR" id="P0C050"/>
<dbReference type="GeneID" id="98344609"/>
<dbReference type="Proteomes" id="UP000006386">
    <property type="component" value="Chromosome"/>
</dbReference>
<dbReference type="GO" id="GO:0005737">
    <property type="term" value="C:cytoplasm"/>
    <property type="evidence" value="ECO:0007669"/>
    <property type="project" value="UniProtKB-SubCell"/>
</dbReference>
<dbReference type="Gene3D" id="3.10.20.90">
    <property type="entry name" value="Phosphatidylinositol 3-kinase Catalytic Subunit, Chain A, domain 1"/>
    <property type="match status" value="1"/>
</dbReference>
<dbReference type="InterPro" id="IPR014921">
    <property type="entry name" value="EsaB"/>
</dbReference>
<dbReference type="InterPro" id="IPR029071">
    <property type="entry name" value="Ubiquitin-like_domsf"/>
</dbReference>
<dbReference type="InterPro" id="IPR024962">
    <property type="entry name" value="YukD-like"/>
</dbReference>
<dbReference type="Pfam" id="PF08817">
    <property type="entry name" value="YukD"/>
    <property type="match status" value="1"/>
</dbReference>
<dbReference type="PIRSF" id="PIRSF037793">
    <property type="entry name" value="DUF_ubiquitin-like_YukD"/>
    <property type="match status" value="1"/>
</dbReference>
<dbReference type="SUPFAM" id="SSF54236">
    <property type="entry name" value="Ubiquitin-like"/>
    <property type="match status" value="1"/>
</dbReference>
<accession>P0C050</accession>
<organism>
    <name type="scientific">Staphylococcus aureus (strain Newman)</name>
    <dbReference type="NCBI Taxonomy" id="426430"/>
    <lineage>
        <taxon>Bacteria</taxon>
        <taxon>Bacillati</taxon>
        <taxon>Bacillota</taxon>
        <taxon>Bacilli</taxon>
        <taxon>Bacillales</taxon>
        <taxon>Staphylococcaceae</taxon>
        <taxon>Staphylococcus</taxon>
    </lineage>
</organism>
<comment type="function">
    <text evidence="1 2">Seems to regulate secreted factors that contribute to the establishment of persistent infections in the host. Negative regulator of EsxC. Not necessary for the production and secretion of EsxA or EsxB.</text>
</comment>
<comment type="subcellular location">
    <subcellularLocation>
        <location evidence="2">Cytoplasm</location>
    </subcellularLocation>
</comment>
<comment type="disruption phenotype">
    <text evidence="2">Deletion mutants display only a small defect in acute infection, but remarkably are unable to promote persistent abscesses during animal infection.</text>
</comment>
<comment type="similarity">
    <text evidence="4">Belongs to the EsaB family.</text>
</comment>
<evidence type="ECO:0000269" key="1">
    <source>
    </source>
</evidence>
<evidence type="ECO:0000269" key="2">
    <source>
    </source>
</evidence>
<evidence type="ECO:0000303" key="3">
    <source>
    </source>
</evidence>
<evidence type="ECO:0000305" key="4"/>
<proteinExistence type="evidence at protein level"/>
<keyword id="KW-0963">Cytoplasm</keyword>
<keyword id="KW-0843">Virulence</keyword>
<feature type="chain" id="PRO_0000087048" description="Type VII secretion system accessory factor EsaB">
    <location>
        <begin position="1"/>
        <end position="80"/>
    </location>
</feature>
<reference key="1">
    <citation type="journal article" date="2008" name="J. Bacteriol.">
        <title>Genome sequence of Staphylococcus aureus strain Newman and comparative analysis of staphylococcal genomes: polymorphism and evolution of two major pathogenicity islands.</title>
        <authorList>
            <person name="Baba T."/>
            <person name="Bae T."/>
            <person name="Schneewind O."/>
            <person name="Takeuchi F."/>
            <person name="Hiramatsu K."/>
        </authorList>
    </citation>
    <scope>NUCLEOTIDE SEQUENCE [LARGE SCALE GENOMIC DNA]</scope>
    <source>
        <strain>Newman</strain>
    </source>
</reference>
<reference key="2">
    <citation type="journal article" date="2005" name="Proc. Natl. Acad. Sci. U.S.A.">
        <title>EsxA and EsxB are secreted by an ESAT-6-like system that is required for the pathogenesis of Staphylococcus aureus infections.</title>
        <authorList>
            <person name="Burts M.L."/>
            <person name="Williams W.A."/>
            <person name="DeBord K."/>
            <person name="Missiakas D.M."/>
        </authorList>
    </citation>
    <scope>FUNCTION IN VIRULENCE</scope>
    <source>
        <strain>Newman</strain>
    </source>
</reference>
<reference key="3">
    <citation type="journal article" date="2008" name="Mol. Microbiol.">
        <title>EsaC substrate for the ESAT-6 secretion pathway and its role in persistent infections of Staphylococcus aureus.</title>
        <authorList>
            <person name="Burts M.L."/>
            <person name="DeDent A.C."/>
            <person name="Missiakas D.M."/>
        </authorList>
    </citation>
    <scope>FUNCTION</scope>
    <scope>SUBCELLULAR LOCATION</scope>
    <scope>DISRUPTION PHENOTYPE</scope>
    <source>
        <strain>Newman</strain>
    </source>
</reference>
<sequence length="80" mass="9121">MNQHVKVTFDFTNYNYGTYDLAVPAYLPIKNLIALVLDSLDISIFDVNTQIKVMTKGQLLVENDRLIDYQIADGDILKLL</sequence>